<name>IDI2_LACLA</name>
<gene>
    <name evidence="1" type="primary">fni</name>
    <name type="ordered locus">LL0407</name>
    <name type="ORF">L11083</name>
</gene>
<proteinExistence type="inferred from homology"/>
<comment type="function">
    <text evidence="1">Involved in the biosynthesis of isoprenoids. Catalyzes the 1,3-allylic rearrangement of the homoallylic substrate isopentenyl (IPP) to its allylic isomer, dimethylallyl diphosphate (DMAPP).</text>
</comment>
<comment type="catalytic activity">
    <reaction evidence="1">
        <text>isopentenyl diphosphate = dimethylallyl diphosphate</text>
        <dbReference type="Rhea" id="RHEA:23284"/>
        <dbReference type="ChEBI" id="CHEBI:57623"/>
        <dbReference type="ChEBI" id="CHEBI:128769"/>
        <dbReference type="EC" id="5.3.3.2"/>
    </reaction>
</comment>
<comment type="cofactor">
    <cofactor evidence="1">
        <name>FMN</name>
        <dbReference type="ChEBI" id="CHEBI:58210"/>
    </cofactor>
</comment>
<comment type="cofactor">
    <cofactor evidence="1">
        <name>NADPH</name>
        <dbReference type="ChEBI" id="CHEBI:57783"/>
    </cofactor>
</comment>
<comment type="cofactor">
    <cofactor evidence="1">
        <name>Mg(2+)</name>
        <dbReference type="ChEBI" id="CHEBI:18420"/>
    </cofactor>
</comment>
<comment type="subunit">
    <text evidence="1">Homooctamer. Dimer of tetramers.</text>
</comment>
<comment type="subcellular location">
    <subcellularLocation>
        <location evidence="1">Cytoplasm</location>
    </subcellularLocation>
</comment>
<comment type="similarity">
    <text evidence="1">Belongs to the IPP isomerase type 2 family.</text>
</comment>
<protein>
    <recommendedName>
        <fullName evidence="1">Isopentenyl-diphosphate delta-isomerase</fullName>
        <shortName evidence="1">IPP isomerase</shortName>
        <ecNumber evidence="1">5.3.3.2</ecNumber>
    </recommendedName>
    <alternativeName>
        <fullName evidence="1">Isopentenyl diphosphate:dimethylallyl diphosphate isomerase</fullName>
    </alternativeName>
    <alternativeName>
        <fullName evidence="1">Isopentenyl pyrophosphate isomerase</fullName>
    </alternativeName>
    <alternativeName>
        <fullName evidence="1">Type 2 isopentenyl diphosphate isomerase</fullName>
        <shortName evidence="1">IDI-2</shortName>
    </alternativeName>
</protein>
<dbReference type="EC" id="5.3.3.2" evidence="1"/>
<dbReference type="EMBL" id="AE005176">
    <property type="protein sequence ID" value="AAK04505.1"/>
    <property type="molecule type" value="Genomic_DNA"/>
</dbReference>
<dbReference type="PIR" id="G86675">
    <property type="entry name" value="G86675"/>
</dbReference>
<dbReference type="RefSeq" id="NP_266563.1">
    <property type="nucleotide sequence ID" value="NC_002662.1"/>
</dbReference>
<dbReference type="RefSeq" id="WP_010905320.1">
    <property type="nucleotide sequence ID" value="NC_002662.1"/>
</dbReference>
<dbReference type="SMR" id="Q9CIF5"/>
<dbReference type="PaxDb" id="272623-L11083"/>
<dbReference type="EnsemblBacteria" id="AAK04505">
    <property type="protein sequence ID" value="AAK04505"/>
    <property type="gene ID" value="L11083"/>
</dbReference>
<dbReference type="KEGG" id="lla:L11083"/>
<dbReference type="PATRIC" id="fig|272623.7.peg.441"/>
<dbReference type="eggNOG" id="COG1304">
    <property type="taxonomic scope" value="Bacteria"/>
</dbReference>
<dbReference type="HOGENOM" id="CLU_065515_0_0_9"/>
<dbReference type="OrthoDB" id="9795032at2"/>
<dbReference type="Proteomes" id="UP000002196">
    <property type="component" value="Chromosome"/>
</dbReference>
<dbReference type="GO" id="GO:0005737">
    <property type="term" value="C:cytoplasm"/>
    <property type="evidence" value="ECO:0007669"/>
    <property type="project" value="UniProtKB-SubCell"/>
</dbReference>
<dbReference type="GO" id="GO:0010181">
    <property type="term" value="F:FMN binding"/>
    <property type="evidence" value="ECO:0007669"/>
    <property type="project" value="UniProtKB-UniRule"/>
</dbReference>
<dbReference type="GO" id="GO:0004452">
    <property type="term" value="F:isopentenyl-diphosphate delta-isomerase activity"/>
    <property type="evidence" value="ECO:0007669"/>
    <property type="project" value="UniProtKB-UniRule"/>
</dbReference>
<dbReference type="GO" id="GO:0000287">
    <property type="term" value="F:magnesium ion binding"/>
    <property type="evidence" value="ECO:0007669"/>
    <property type="project" value="UniProtKB-UniRule"/>
</dbReference>
<dbReference type="GO" id="GO:0070402">
    <property type="term" value="F:NADPH binding"/>
    <property type="evidence" value="ECO:0007669"/>
    <property type="project" value="UniProtKB-UniRule"/>
</dbReference>
<dbReference type="GO" id="GO:0016491">
    <property type="term" value="F:oxidoreductase activity"/>
    <property type="evidence" value="ECO:0007669"/>
    <property type="project" value="InterPro"/>
</dbReference>
<dbReference type="GO" id="GO:0008299">
    <property type="term" value="P:isoprenoid biosynthetic process"/>
    <property type="evidence" value="ECO:0007669"/>
    <property type="project" value="UniProtKB-UniRule"/>
</dbReference>
<dbReference type="CDD" id="cd02811">
    <property type="entry name" value="IDI-2_FMN"/>
    <property type="match status" value="1"/>
</dbReference>
<dbReference type="Gene3D" id="3.20.20.70">
    <property type="entry name" value="Aldolase class I"/>
    <property type="match status" value="1"/>
</dbReference>
<dbReference type="HAMAP" id="MF_00354">
    <property type="entry name" value="Idi_2"/>
    <property type="match status" value="1"/>
</dbReference>
<dbReference type="InterPro" id="IPR013785">
    <property type="entry name" value="Aldolase_TIM"/>
</dbReference>
<dbReference type="InterPro" id="IPR000262">
    <property type="entry name" value="FMN-dep_DH"/>
</dbReference>
<dbReference type="InterPro" id="IPR011179">
    <property type="entry name" value="IPdP_isomerase"/>
</dbReference>
<dbReference type="NCBIfam" id="TIGR02151">
    <property type="entry name" value="IPP_isom_2"/>
    <property type="match status" value="1"/>
</dbReference>
<dbReference type="PANTHER" id="PTHR43665">
    <property type="entry name" value="ISOPENTENYL-DIPHOSPHATE DELTA-ISOMERASE"/>
    <property type="match status" value="1"/>
</dbReference>
<dbReference type="PANTHER" id="PTHR43665:SF1">
    <property type="entry name" value="ISOPENTENYL-DIPHOSPHATE DELTA-ISOMERASE"/>
    <property type="match status" value="1"/>
</dbReference>
<dbReference type="Pfam" id="PF01070">
    <property type="entry name" value="FMN_dh"/>
    <property type="match status" value="1"/>
</dbReference>
<dbReference type="PIRSF" id="PIRSF003314">
    <property type="entry name" value="IPP_isomerase"/>
    <property type="match status" value="1"/>
</dbReference>
<dbReference type="SUPFAM" id="SSF51395">
    <property type="entry name" value="FMN-linked oxidoreductases"/>
    <property type="match status" value="1"/>
</dbReference>
<reference key="1">
    <citation type="journal article" date="2001" name="Genome Res.">
        <title>The complete genome sequence of the lactic acid bacterium Lactococcus lactis ssp. lactis IL1403.</title>
        <authorList>
            <person name="Bolotin A."/>
            <person name="Wincker P."/>
            <person name="Mauger S."/>
            <person name="Jaillon O."/>
            <person name="Malarme K."/>
            <person name="Weissenbach J."/>
            <person name="Ehrlich S.D."/>
            <person name="Sorokin A."/>
        </authorList>
    </citation>
    <scope>NUCLEOTIDE SEQUENCE [LARGE SCALE GENOMIC DNA]</scope>
    <source>
        <strain>IL1403</strain>
    </source>
</reference>
<accession>Q9CIF5</accession>
<feature type="chain" id="PRO_0000134410" description="Isopentenyl-diphosphate delta-isomerase">
    <location>
        <begin position="1"/>
        <end position="347"/>
    </location>
</feature>
<feature type="binding site" evidence="1">
    <location>
        <begin position="11"/>
        <end position="12"/>
    </location>
    <ligand>
        <name>substrate</name>
    </ligand>
</feature>
<feature type="binding site" evidence="1">
    <location>
        <begin position="72"/>
        <end position="74"/>
    </location>
    <ligand>
        <name>FMN</name>
        <dbReference type="ChEBI" id="CHEBI:58210"/>
    </ligand>
</feature>
<feature type="binding site" evidence="1">
    <location>
        <position position="102"/>
    </location>
    <ligand>
        <name>FMN</name>
        <dbReference type="ChEBI" id="CHEBI:58210"/>
    </ligand>
</feature>
<feature type="binding site" evidence="1">
    <location>
        <position position="131"/>
    </location>
    <ligand>
        <name>FMN</name>
        <dbReference type="ChEBI" id="CHEBI:58210"/>
    </ligand>
</feature>
<feature type="binding site" evidence="1">
    <location>
        <position position="161"/>
    </location>
    <ligand>
        <name>substrate</name>
    </ligand>
</feature>
<feature type="binding site" evidence="1">
    <location>
        <position position="162"/>
    </location>
    <ligand>
        <name>Mg(2+)</name>
        <dbReference type="ChEBI" id="CHEBI:18420"/>
    </ligand>
</feature>
<feature type="binding site" evidence="1">
    <location>
        <position position="192"/>
    </location>
    <ligand>
        <name>FMN</name>
        <dbReference type="ChEBI" id="CHEBI:58210"/>
    </ligand>
</feature>
<feature type="binding site" evidence="1">
    <location>
        <position position="222"/>
    </location>
    <ligand>
        <name>FMN</name>
        <dbReference type="ChEBI" id="CHEBI:58210"/>
    </ligand>
</feature>
<feature type="binding site" evidence="1">
    <location>
        <begin position="287"/>
        <end position="288"/>
    </location>
    <ligand>
        <name>FMN</name>
        <dbReference type="ChEBI" id="CHEBI:58210"/>
    </ligand>
</feature>
<sequence>MKTEKEIHQHRKDEHLSLAYKYWREEKNQTSGLTFSDSRIIPNSLPELSTKKINFSSEVFGQNFEFPFYIEAMTGGTERADKINAQLAEIAKNQHLAMAVGSQSIALKFPELAAGFSEVRKIHSSGFLFANIGAGHSLENAKRAVDMIEANALEIHVNTAQELPMDEGDREFYWLENINEIASQLEVPVVVKEVGFGISQKTFKALAKTSVSGINIGGAGGTNFAWIERKRSKNGFNLDEFGLSTLESLLEAKMADNRKSLIATGGITSAQEIFKSLILGADLSSSAGFILKNLMQTGPEKVEEVIEQWKQDLNKLFVLTGSKNIEECRKVELLYSINMLNFIQQRK</sequence>
<keyword id="KW-0963">Cytoplasm</keyword>
<keyword id="KW-0285">Flavoprotein</keyword>
<keyword id="KW-0288">FMN</keyword>
<keyword id="KW-0413">Isomerase</keyword>
<keyword id="KW-0414">Isoprene biosynthesis</keyword>
<keyword id="KW-0460">Magnesium</keyword>
<keyword id="KW-0479">Metal-binding</keyword>
<keyword id="KW-0521">NADP</keyword>
<keyword id="KW-1185">Reference proteome</keyword>
<evidence type="ECO:0000255" key="1">
    <source>
        <dbReference type="HAMAP-Rule" id="MF_00354"/>
    </source>
</evidence>
<organism>
    <name type="scientific">Lactococcus lactis subsp. lactis (strain IL1403)</name>
    <name type="common">Streptococcus lactis</name>
    <dbReference type="NCBI Taxonomy" id="272623"/>
    <lineage>
        <taxon>Bacteria</taxon>
        <taxon>Bacillati</taxon>
        <taxon>Bacillota</taxon>
        <taxon>Bacilli</taxon>
        <taxon>Lactobacillales</taxon>
        <taxon>Streptococcaceae</taxon>
        <taxon>Lactococcus</taxon>
    </lineage>
</organism>